<evidence type="ECO:0000250" key="1"/>
<evidence type="ECO:0000255" key="2">
    <source>
        <dbReference type="PROSITE-ProRule" id="PRU00175"/>
    </source>
</evidence>
<evidence type="ECO:0000255" key="3">
    <source>
        <dbReference type="PROSITE-ProRule" id="PRU00455"/>
    </source>
</evidence>
<evidence type="ECO:0000256" key="4">
    <source>
        <dbReference type="SAM" id="MobiDB-lite"/>
    </source>
</evidence>
<evidence type="ECO:0000305" key="5"/>
<accession>Q9C6H2</accession>
<dbReference type="EC" id="2.3.2.27"/>
<dbReference type="EMBL" id="AC079285">
    <property type="protein sequence ID" value="AAG51179.1"/>
    <property type="molecule type" value="Genomic_DNA"/>
</dbReference>
<dbReference type="EMBL" id="CP002684">
    <property type="protein sequence ID" value="AEE34538.1"/>
    <property type="molecule type" value="Genomic_DNA"/>
</dbReference>
<dbReference type="PIR" id="C96692">
    <property type="entry name" value="C96692"/>
</dbReference>
<dbReference type="RefSeq" id="NP_176836.1">
    <property type="nucleotide sequence ID" value="NM_105334.2"/>
</dbReference>
<dbReference type="SMR" id="Q9C6H2"/>
<dbReference type="STRING" id="3702.Q9C6H2"/>
<dbReference type="GlyGen" id="Q9C6H2">
    <property type="glycosylation" value="1 site"/>
</dbReference>
<dbReference type="PaxDb" id="3702-AT1G66630.1"/>
<dbReference type="EnsemblPlants" id="AT1G66630.1">
    <property type="protein sequence ID" value="AT1G66630.1"/>
    <property type="gene ID" value="AT1G66630"/>
</dbReference>
<dbReference type="GeneID" id="842981"/>
<dbReference type="Gramene" id="AT1G66630.1">
    <property type="protein sequence ID" value="AT1G66630.1"/>
    <property type="gene ID" value="AT1G66630"/>
</dbReference>
<dbReference type="KEGG" id="ath:AT1G66630"/>
<dbReference type="Araport" id="AT1G66630"/>
<dbReference type="TAIR" id="AT1G66630">
    <property type="gene designation" value="PEG4"/>
</dbReference>
<dbReference type="eggNOG" id="KOG3002">
    <property type="taxonomic scope" value="Eukaryota"/>
</dbReference>
<dbReference type="HOGENOM" id="CLU_040603_2_2_1"/>
<dbReference type="InParanoid" id="Q9C6H2"/>
<dbReference type="OMA" id="ARISYYQ"/>
<dbReference type="PhylomeDB" id="Q9C6H2"/>
<dbReference type="UniPathway" id="UPA00143"/>
<dbReference type="PRO" id="PR:Q9C6H2"/>
<dbReference type="Proteomes" id="UP000006548">
    <property type="component" value="Chromosome 1"/>
</dbReference>
<dbReference type="ExpressionAtlas" id="Q9C6H2">
    <property type="expression patterns" value="baseline and differential"/>
</dbReference>
<dbReference type="GO" id="GO:0016740">
    <property type="term" value="F:transferase activity"/>
    <property type="evidence" value="ECO:0007669"/>
    <property type="project" value="UniProtKB-KW"/>
</dbReference>
<dbReference type="GO" id="GO:0008270">
    <property type="term" value="F:zinc ion binding"/>
    <property type="evidence" value="ECO:0007669"/>
    <property type="project" value="UniProtKB-KW"/>
</dbReference>
<dbReference type="GO" id="GO:0016567">
    <property type="term" value="P:protein ubiquitination"/>
    <property type="evidence" value="ECO:0007669"/>
    <property type="project" value="UniProtKB-UniPathway"/>
</dbReference>
<dbReference type="CDD" id="cd16571">
    <property type="entry name" value="RING-HC_SIAHs"/>
    <property type="match status" value="1"/>
</dbReference>
<dbReference type="Gene3D" id="3.30.40.10">
    <property type="entry name" value="Zinc/RING finger domain, C3HC4 (zinc finger)"/>
    <property type="match status" value="1"/>
</dbReference>
<dbReference type="InterPro" id="IPR049548">
    <property type="entry name" value="Sina-like_RING"/>
</dbReference>
<dbReference type="InterPro" id="IPR044286">
    <property type="entry name" value="SINL_plant"/>
</dbReference>
<dbReference type="InterPro" id="IPR001841">
    <property type="entry name" value="Znf_RING"/>
</dbReference>
<dbReference type="InterPro" id="IPR013083">
    <property type="entry name" value="Znf_RING/FYVE/PHD"/>
</dbReference>
<dbReference type="InterPro" id="IPR013010">
    <property type="entry name" value="Znf_SIAH"/>
</dbReference>
<dbReference type="PANTHER" id="PTHR46632:SF11">
    <property type="entry name" value="E3 UBIQUITIN-PROTEIN LIGASE SINA-LIKE 1-RELATED"/>
    <property type="match status" value="1"/>
</dbReference>
<dbReference type="PANTHER" id="PTHR46632">
    <property type="entry name" value="E3 UBIQUITIN-PROTEIN LIGASE SINA-LIKE 4"/>
    <property type="match status" value="1"/>
</dbReference>
<dbReference type="Pfam" id="PF21362">
    <property type="entry name" value="Sina_RING"/>
    <property type="match status" value="1"/>
</dbReference>
<dbReference type="Pfam" id="PF21361">
    <property type="entry name" value="Sina_ZnF"/>
    <property type="match status" value="1"/>
</dbReference>
<dbReference type="SUPFAM" id="SSF57850">
    <property type="entry name" value="RING/U-box"/>
    <property type="match status" value="1"/>
</dbReference>
<dbReference type="SUPFAM" id="SSF49599">
    <property type="entry name" value="TRAF domain-like"/>
    <property type="match status" value="1"/>
</dbReference>
<dbReference type="PROSITE" id="PS50089">
    <property type="entry name" value="ZF_RING_2"/>
    <property type="match status" value="1"/>
</dbReference>
<dbReference type="PROSITE" id="PS51081">
    <property type="entry name" value="ZF_SIAH"/>
    <property type="match status" value="1"/>
</dbReference>
<keyword id="KW-0479">Metal-binding</keyword>
<keyword id="KW-1185">Reference proteome</keyword>
<keyword id="KW-0808">Transferase</keyword>
<keyword id="KW-0833">Ubl conjugation pathway</keyword>
<keyword id="KW-0862">Zinc</keyword>
<keyword id="KW-0863">Zinc-finger</keyword>
<protein>
    <recommendedName>
        <fullName>E3 ubiquitin-protein ligase SINA-like 3</fullName>
        <ecNumber>2.3.2.27</ecNumber>
    </recommendedName>
    <alternativeName>
        <fullName evidence="5">RING-type E3 ubiquitin transferase SINA-like 3</fullName>
    </alternativeName>
    <alternativeName>
        <fullName>Seven in absentia-like protein 3</fullName>
    </alternativeName>
</protein>
<comment type="function">
    <text evidence="1">E3 ubiquitin-protein ligase that mediates ubiquitination and subsequent proteasomal degradation of target proteins. E3 ubiquitin ligases accept ubiquitin from an E2 ubiquitin-conjugating enzyme in the form of a thioester and then directly transfers the ubiquitin to targeted substrates. It probably triggers the ubiquitin-mediated degradation of different substrates.</text>
</comment>
<comment type="catalytic activity">
    <reaction>
        <text>S-ubiquitinyl-[E2 ubiquitin-conjugating enzyme]-L-cysteine + [acceptor protein]-L-lysine = [E2 ubiquitin-conjugating enzyme]-L-cysteine + N(6)-ubiquitinyl-[acceptor protein]-L-lysine.</text>
        <dbReference type="EC" id="2.3.2.27"/>
    </reaction>
</comment>
<comment type="pathway">
    <text>Protein modification; protein ubiquitination.</text>
</comment>
<comment type="domain">
    <text evidence="1">The RING-type zinc finger domain is essential for ubiquitin ligase activity.</text>
</comment>
<comment type="domain">
    <text evidence="1">The SBD domain (substrate-binding domain) mediates the homodimerization and the interaction with substrate proteins. It is related to the TRAF family.</text>
</comment>
<comment type="similarity">
    <text evidence="5">Belongs to the SINA (Seven in absentia) family.</text>
</comment>
<feature type="chain" id="PRO_0000299192" description="E3 ubiquitin-protein ligase SINA-like 3">
    <location>
        <begin position="1"/>
        <end position="303"/>
    </location>
</feature>
<feature type="zinc finger region" description="RING-type" evidence="2">
    <location>
        <begin position="49"/>
        <end position="85"/>
    </location>
</feature>
<feature type="zinc finger region" description="SIAH-type" evidence="3">
    <location>
        <begin position="102"/>
        <end position="162"/>
    </location>
</feature>
<feature type="region of interest" description="Disordered" evidence="4">
    <location>
        <begin position="1"/>
        <end position="30"/>
    </location>
</feature>
<feature type="region of interest" description="SBD" evidence="1">
    <location>
        <begin position="99"/>
        <end position="286"/>
    </location>
</feature>
<feature type="binding site" evidence="1">
    <location>
        <position position="107"/>
    </location>
    <ligand>
        <name>Zn(2+)</name>
        <dbReference type="ChEBI" id="CHEBI:29105"/>
        <label>1</label>
    </ligand>
</feature>
<feature type="binding site" evidence="1">
    <location>
        <position position="114"/>
    </location>
    <ligand>
        <name>Zn(2+)</name>
        <dbReference type="ChEBI" id="CHEBI:29105"/>
        <label>1</label>
    </ligand>
</feature>
<feature type="binding site" evidence="1">
    <location>
        <position position="128"/>
    </location>
    <ligand>
        <name>Zn(2+)</name>
        <dbReference type="ChEBI" id="CHEBI:29105"/>
        <label>1</label>
    </ligand>
</feature>
<feature type="binding site" evidence="1">
    <location>
        <position position="132"/>
    </location>
    <ligand>
        <name>Zn(2+)</name>
        <dbReference type="ChEBI" id="CHEBI:29105"/>
        <label>1</label>
    </ligand>
</feature>
<feature type="binding site" evidence="1">
    <location>
        <position position="139"/>
    </location>
    <ligand>
        <name>Zn(2+)</name>
        <dbReference type="ChEBI" id="CHEBI:29105"/>
        <label>2</label>
    </ligand>
</feature>
<feature type="binding site" evidence="1">
    <location>
        <position position="144"/>
    </location>
    <ligand>
        <name>Zn(2+)</name>
        <dbReference type="ChEBI" id="CHEBI:29105"/>
        <label>2</label>
    </ligand>
</feature>
<feature type="binding site" evidence="1">
    <location>
        <position position="156"/>
    </location>
    <ligand>
        <name>Zn(2+)</name>
        <dbReference type="ChEBI" id="CHEBI:29105"/>
        <label>2</label>
    </ligand>
</feature>
<feature type="binding site" evidence="1">
    <location>
        <position position="161"/>
    </location>
    <ligand>
        <name>Zn(2+)</name>
        <dbReference type="ChEBI" id="CHEBI:29105"/>
        <label>2</label>
    </ligand>
</feature>
<sequence length="303" mass="34385">MENITNNSERSLDRPKRQRPVSMENVGGTASGSEVARSATLLELDLLDCPICYHKLGAPIYQCDNGHIACSSCCKKVKYKCPYCSLRIGFFRSRILEKIVEAVVVSCPNAKYGCTEKIPYDNESESAHERVCEFTLCYCPEPECKYTGVYTDLYRHYHAEHKTDHSWFKCGEYNNAWLHVTGEKLSFLVLQEYEDGPLVVVQCSMESHGICVTVNCIAPCAPGVGEFSCHLIYRNGSEKITFESKKMNKIQKVSPENHVANYKPIPYYLRGEASNFMSIPYYLLDEASILKMQICIRRSGEEV</sequence>
<gene>
    <name type="ordered locus">At1g66630</name>
    <name type="ORF">T12I7.8</name>
</gene>
<reference key="1">
    <citation type="journal article" date="2000" name="Nature">
        <title>Sequence and analysis of chromosome 1 of the plant Arabidopsis thaliana.</title>
        <authorList>
            <person name="Theologis A."/>
            <person name="Ecker J.R."/>
            <person name="Palm C.J."/>
            <person name="Federspiel N.A."/>
            <person name="Kaul S."/>
            <person name="White O."/>
            <person name="Alonso J."/>
            <person name="Altafi H."/>
            <person name="Araujo R."/>
            <person name="Bowman C.L."/>
            <person name="Brooks S.Y."/>
            <person name="Buehler E."/>
            <person name="Chan A."/>
            <person name="Chao Q."/>
            <person name="Chen H."/>
            <person name="Cheuk R.F."/>
            <person name="Chin C.W."/>
            <person name="Chung M.K."/>
            <person name="Conn L."/>
            <person name="Conway A.B."/>
            <person name="Conway A.R."/>
            <person name="Creasy T.H."/>
            <person name="Dewar K."/>
            <person name="Dunn P."/>
            <person name="Etgu P."/>
            <person name="Feldblyum T.V."/>
            <person name="Feng J.-D."/>
            <person name="Fong B."/>
            <person name="Fujii C.Y."/>
            <person name="Gill J.E."/>
            <person name="Goldsmith A.D."/>
            <person name="Haas B."/>
            <person name="Hansen N.F."/>
            <person name="Hughes B."/>
            <person name="Huizar L."/>
            <person name="Hunter J.L."/>
            <person name="Jenkins J."/>
            <person name="Johnson-Hopson C."/>
            <person name="Khan S."/>
            <person name="Khaykin E."/>
            <person name="Kim C.J."/>
            <person name="Koo H.L."/>
            <person name="Kremenetskaia I."/>
            <person name="Kurtz D.B."/>
            <person name="Kwan A."/>
            <person name="Lam B."/>
            <person name="Langin-Hooper S."/>
            <person name="Lee A."/>
            <person name="Lee J.M."/>
            <person name="Lenz C.A."/>
            <person name="Li J.H."/>
            <person name="Li Y.-P."/>
            <person name="Lin X."/>
            <person name="Liu S.X."/>
            <person name="Liu Z.A."/>
            <person name="Luros J.S."/>
            <person name="Maiti R."/>
            <person name="Marziali A."/>
            <person name="Militscher J."/>
            <person name="Miranda M."/>
            <person name="Nguyen M."/>
            <person name="Nierman W.C."/>
            <person name="Osborne B.I."/>
            <person name="Pai G."/>
            <person name="Peterson J."/>
            <person name="Pham P.K."/>
            <person name="Rizzo M."/>
            <person name="Rooney T."/>
            <person name="Rowley D."/>
            <person name="Sakano H."/>
            <person name="Salzberg S.L."/>
            <person name="Schwartz J.R."/>
            <person name="Shinn P."/>
            <person name="Southwick A.M."/>
            <person name="Sun H."/>
            <person name="Tallon L.J."/>
            <person name="Tambunga G."/>
            <person name="Toriumi M.J."/>
            <person name="Town C.D."/>
            <person name="Utterback T."/>
            <person name="Van Aken S."/>
            <person name="Vaysberg M."/>
            <person name="Vysotskaia V.S."/>
            <person name="Walker M."/>
            <person name="Wu D."/>
            <person name="Yu G."/>
            <person name="Fraser C.M."/>
            <person name="Venter J.C."/>
            <person name="Davis R.W."/>
        </authorList>
    </citation>
    <scope>NUCLEOTIDE SEQUENCE [LARGE SCALE GENOMIC DNA]</scope>
    <source>
        <strain>cv. Columbia</strain>
    </source>
</reference>
<reference key="2">
    <citation type="journal article" date="2017" name="Plant J.">
        <title>Araport11: a complete reannotation of the Arabidopsis thaliana reference genome.</title>
        <authorList>
            <person name="Cheng C.Y."/>
            <person name="Krishnakumar V."/>
            <person name="Chan A.P."/>
            <person name="Thibaud-Nissen F."/>
            <person name="Schobel S."/>
            <person name="Town C.D."/>
        </authorList>
    </citation>
    <scope>GENOME REANNOTATION</scope>
    <source>
        <strain>cv. Columbia</strain>
    </source>
</reference>
<proteinExistence type="evidence at transcript level"/>
<organism>
    <name type="scientific">Arabidopsis thaliana</name>
    <name type="common">Mouse-ear cress</name>
    <dbReference type="NCBI Taxonomy" id="3702"/>
    <lineage>
        <taxon>Eukaryota</taxon>
        <taxon>Viridiplantae</taxon>
        <taxon>Streptophyta</taxon>
        <taxon>Embryophyta</taxon>
        <taxon>Tracheophyta</taxon>
        <taxon>Spermatophyta</taxon>
        <taxon>Magnoliopsida</taxon>
        <taxon>eudicotyledons</taxon>
        <taxon>Gunneridae</taxon>
        <taxon>Pentapetalae</taxon>
        <taxon>rosids</taxon>
        <taxon>malvids</taxon>
        <taxon>Brassicales</taxon>
        <taxon>Brassicaceae</taxon>
        <taxon>Camelineae</taxon>
        <taxon>Arabidopsis</taxon>
    </lineage>
</organism>
<name>SINL3_ARATH</name>